<reference key="1">
    <citation type="journal article" date="1976" name="Biochim. Biophys. Acta">
        <title>The myoglobin of primates. VIII. Nycticebus coucang (slow loris).</title>
        <authorList>
            <person name="Romero-Herrera A.E."/>
            <person name="Lehmann H."/>
            <person name="Castillo O."/>
        </authorList>
    </citation>
    <scope>PROTEIN SEQUENCE OF 2-154</scope>
    <source>
        <tissue>Skeletal muscle</tissue>
    </source>
</reference>
<protein>
    <recommendedName>
        <fullName>Myoglobin</fullName>
    </recommendedName>
    <alternativeName>
        <fullName evidence="1">Nitrite reductase MB</fullName>
        <ecNumber evidence="1">1.7.-.-</ecNumber>
    </alternativeName>
    <alternativeName>
        <fullName evidence="1">Pseudoperoxidase MB</fullName>
        <ecNumber evidence="1">1.11.1.-</ecNumber>
    </alternativeName>
</protein>
<dbReference type="EC" id="1.7.-.-" evidence="1"/>
<dbReference type="EC" id="1.11.1.-" evidence="1"/>
<dbReference type="PIR" id="A02489">
    <property type="entry name" value="MYLR"/>
</dbReference>
<dbReference type="SMR" id="P02167"/>
<dbReference type="GO" id="GO:0070062">
    <property type="term" value="C:extracellular exosome"/>
    <property type="evidence" value="ECO:0007669"/>
    <property type="project" value="TreeGrafter"/>
</dbReference>
<dbReference type="GO" id="GO:0016528">
    <property type="term" value="C:sarcoplasm"/>
    <property type="evidence" value="ECO:0000250"/>
    <property type="project" value="UniProtKB"/>
</dbReference>
<dbReference type="GO" id="GO:0020037">
    <property type="term" value="F:heme binding"/>
    <property type="evidence" value="ECO:0007669"/>
    <property type="project" value="InterPro"/>
</dbReference>
<dbReference type="GO" id="GO:0046872">
    <property type="term" value="F:metal ion binding"/>
    <property type="evidence" value="ECO:0007669"/>
    <property type="project" value="UniProtKB-KW"/>
</dbReference>
<dbReference type="GO" id="GO:0098809">
    <property type="term" value="F:nitrite reductase activity"/>
    <property type="evidence" value="ECO:0000250"/>
    <property type="project" value="UniProtKB"/>
</dbReference>
<dbReference type="GO" id="GO:0019825">
    <property type="term" value="F:oxygen binding"/>
    <property type="evidence" value="ECO:0007669"/>
    <property type="project" value="InterPro"/>
</dbReference>
<dbReference type="GO" id="GO:0005344">
    <property type="term" value="F:oxygen carrier activity"/>
    <property type="evidence" value="ECO:0000250"/>
    <property type="project" value="UniProtKB"/>
</dbReference>
<dbReference type="GO" id="GO:0004601">
    <property type="term" value="F:peroxidase activity"/>
    <property type="evidence" value="ECO:0000250"/>
    <property type="project" value="UniProtKB"/>
</dbReference>
<dbReference type="GO" id="GO:0019430">
    <property type="term" value="P:removal of superoxide radicals"/>
    <property type="evidence" value="ECO:0000250"/>
    <property type="project" value="UniProtKB"/>
</dbReference>
<dbReference type="CDD" id="cd08926">
    <property type="entry name" value="Mb"/>
    <property type="match status" value="1"/>
</dbReference>
<dbReference type="Gene3D" id="6.10.140.2100">
    <property type="match status" value="1"/>
</dbReference>
<dbReference type="Gene3D" id="6.10.140.2110">
    <property type="match status" value="1"/>
</dbReference>
<dbReference type="InterPro" id="IPR000971">
    <property type="entry name" value="Globin"/>
</dbReference>
<dbReference type="InterPro" id="IPR009050">
    <property type="entry name" value="Globin-like_sf"/>
</dbReference>
<dbReference type="InterPro" id="IPR002335">
    <property type="entry name" value="Myoglobin"/>
</dbReference>
<dbReference type="PANTHER" id="PTHR47132">
    <property type="entry name" value="MYOGLOBIN"/>
    <property type="match status" value="1"/>
</dbReference>
<dbReference type="PANTHER" id="PTHR47132:SF1">
    <property type="entry name" value="MYOGLOBIN"/>
    <property type="match status" value="1"/>
</dbReference>
<dbReference type="Pfam" id="PF00042">
    <property type="entry name" value="Globin"/>
    <property type="match status" value="1"/>
</dbReference>
<dbReference type="PRINTS" id="PR00613">
    <property type="entry name" value="MYOGLOBIN"/>
</dbReference>
<dbReference type="SUPFAM" id="SSF46458">
    <property type="entry name" value="Globin-like"/>
    <property type="match status" value="1"/>
</dbReference>
<dbReference type="PROSITE" id="PS01033">
    <property type="entry name" value="GLOBIN"/>
    <property type="match status" value="1"/>
</dbReference>
<organism>
    <name type="scientific">Nycticebus coucang</name>
    <name type="common">Slow loris</name>
    <dbReference type="NCBI Taxonomy" id="9470"/>
    <lineage>
        <taxon>Eukaryota</taxon>
        <taxon>Metazoa</taxon>
        <taxon>Chordata</taxon>
        <taxon>Craniata</taxon>
        <taxon>Vertebrata</taxon>
        <taxon>Euteleostomi</taxon>
        <taxon>Mammalia</taxon>
        <taxon>Eutheria</taxon>
        <taxon>Euarchontoglires</taxon>
        <taxon>Primates</taxon>
        <taxon>Strepsirrhini</taxon>
        <taxon>Lorisiformes</taxon>
        <taxon>Lorisidae</taxon>
        <taxon>Nycticebus</taxon>
    </lineage>
</organism>
<name>MYG_NYCCO</name>
<keyword id="KW-0963">Cytoplasm</keyword>
<keyword id="KW-0903">Direct protein sequencing</keyword>
<keyword id="KW-0349">Heme</keyword>
<keyword id="KW-0408">Iron</keyword>
<keyword id="KW-0479">Metal-binding</keyword>
<keyword id="KW-0514">Muscle protein</keyword>
<keyword id="KW-0560">Oxidoreductase</keyword>
<keyword id="KW-0561">Oxygen transport</keyword>
<keyword id="KW-0597">Phosphoprotein</keyword>
<keyword id="KW-0813">Transport</keyword>
<feature type="initiator methionine" description="Removed" evidence="8">
    <location>
        <position position="1"/>
    </location>
</feature>
<feature type="chain" id="PRO_0000053320" description="Myoglobin">
    <location>
        <begin position="2"/>
        <end position="154"/>
    </location>
</feature>
<feature type="domain" description="Globin" evidence="7">
    <location>
        <begin position="2"/>
        <end position="148"/>
    </location>
</feature>
<feature type="binding site" evidence="5">
    <location>
        <position position="65"/>
    </location>
    <ligand>
        <name>nitrite</name>
        <dbReference type="ChEBI" id="CHEBI:16301"/>
    </ligand>
</feature>
<feature type="binding site" evidence="3 7">
    <location>
        <position position="65"/>
    </location>
    <ligand>
        <name>O2</name>
        <dbReference type="ChEBI" id="CHEBI:15379"/>
    </ligand>
</feature>
<feature type="binding site" description="proximal binding residue" evidence="1">
    <location>
        <position position="94"/>
    </location>
    <ligand>
        <name>heme b</name>
        <dbReference type="ChEBI" id="CHEBI:60344"/>
    </ligand>
    <ligandPart>
        <name>Fe</name>
        <dbReference type="ChEBI" id="CHEBI:18248"/>
    </ligandPart>
</feature>
<feature type="modified residue" description="Phosphoserine" evidence="6">
    <location>
        <position position="4"/>
    </location>
</feature>
<feature type="modified residue" description="Phosphothreonine" evidence="4">
    <location>
        <position position="68"/>
    </location>
</feature>
<evidence type="ECO:0000250" key="1">
    <source>
        <dbReference type="UniProtKB" id="P02144"/>
    </source>
</evidence>
<evidence type="ECO:0000250" key="2">
    <source>
        <dbReference type="UniProtKB" id="P02185"/>
    </source>
</evidence>
<evidence type="ECO:0000250" key="3">
    <source>
        <dbReference type="UniProtKB" id="P02189"/>
    </source>
</evidence>
<evidence type="ECO:0000250" key="4">
    <source>
        <dbReference type="UniProtKB" id="P04247"/>
    </source>
</evidence>
<evidence type="ECO:0000250" key="5">
    <source>
        <dbReference type="UniProtKB" id="P68082"/>
    </source>
</evidence>
<evidence type="ECO:0000250" key="6">
    <source>
        <dbReference type="UniProtKB" id="Q9QZ76"/>
    </source>
</evidence>
<evidence type="ECO:0000255" key="7">
    <source>
        <dbReference type="PROSITE-ProRule" id="PRU00238"/>
    </source>
</evidence>
<evidence type="ECO:0000269" key="8">
    <source>
    </source>
</evidence>
<proteinExistence type="evidence at protein level"/>
<accession>P02167</accession>
<gene>
    <name type="primary">MB</name>
</gene>
<comment type="function">
    <text evidence="1">Monomeric heme protein which primary function is to store oxygen and facilitate its diffusion within muscle tissues. Reversibly binds oxygen through a pentacoordinated heme iron and enables its timely and efficient release as needed during periods of heightened demand. Depending on the oxidative conditions of tissues and cells, and in addition to its ability to bind oxygen, it also has a nitrite reductase activity whereby it regulates the production of bioactive nitric oxide. Under stress conditions, like hypoxia and anoxia, it also protects cells against reactive oxygen species thanks to its pseudoperoxidase activity.</text>
</comment>
<comment type="catalytic activity">
    <reaction evidence="1">
        <text>Fe(III)-heme b-[protein] + nitric oxide + H2O = Fe(II)-heme b-[protein] + nitrite + 2 H(+)</text>
        <dbReference type="Rhea" id="RHEA:77711"/>
        <dbReference type="Rhea" id="RHEA-COMP:18975"/>
        <dbReference type="Rhea" id="RHEA-COMP:18976"/>
        <dbReference type="ChEBI" id="CHEBI:15377"/>
        <dbReference type="ChEBI" id="CHEBI:15378"/>
        <dbReference type="ChEBI" id="CHEBI:16301"/>
        <dbReference type="ChEBI" id="CHEBI:16480"/>
        <dbReference type="ChEBI" id="CHEBI:55376"/>
        <dbReference type="ChEBI" id="CHEBI:60344"/>
    </reaction>
    <physiologicalReaction direction="right-to-left" evidence="1">
        <dbReference type="Rhea" id="RHEA:77713"/>
    </physiologicalReaction>
</comment>
<comment type="catalytic activity">
    <reaction evidence="1">
        <text>H2O2 + AH2 = A + 2 H2O</text>
        <dbReference type="Rhea" id="RHEA:30275"/>
        <dbReference type="ChEBI" id="CHEBI:13193"/>
        <dbReference type="ChEBI" id="CHEBI:15377"/>
        <dbReference type="ChEBI" id="CHEBI:16240"/>
        <dbReference type="ChEBI" id="CHEBI:17499"/>
    </reaction>
</comment>
<comment type="subunit">
    <text evidence="2">Monomeric.</text>
</comment>
<comment type="subcellular location">
    <subcellularLocation>
        <location evidence="1">Cytoplasm</location>
        <location evidence="1">Sarcoplasm</location>
    </subcellularLocation>
</comment>
<comment type="similarity">
    <text evidence="7">Belongs to the globin family.</text>
</comment>
<sequence length="154" mass="16955">MGLSDGEWQSVLNVWGKVEADLAGHGQEILIRLFTAHPETLEKFDKFKNLKTPDEMKASEDLKKHGVTVLTALGGILKKKGQHEAEIKPLAQSHATKHKIPVKYLEFISGAIIHVLQSKHPGDFGADAQGAMSKALELFRNDIAAKYKELGFQG</sequence>